<accession>Q8EBZ8</accession>
<reference key="1">
    <citation type="journal article" date="2002" name="Nat. Biotechnol.">
        <title>Genome sequence of the dissimilatory metal ion-reducing bacterium Shewanella oneidensis.</title>
        <authorList>
            <person name="Heidelberg J.F."/>
            <person name="Paulsen I.T."/>
            <person name="Nelson K.E."/>
            <person name="Gaidos E.J."/>
            <person name="Nelson W.C."/>
            <person name="Read T.D."/>
            <person name="Eisen J.A."/>
            <person name="Seshadri R."/>
            <person name="Ward N.L."/>
            <person name="Methe B.A."/>
            <person name="Clayton R.A."/>
            <person name="Meyer T."/>
            <person name="Tsapin A."/>
            <person name="Scott J."/>
            <person name="Beanan M.J."/>
            <person name="Brinkac L.M."/>
            <person name="Daugherty S.C."/>
            <person name="DeBoy R.T."/>
            <person name="Dodson R.J."/>
            <person name="Durkin A.S."/>
            <person name="Haft D.H."/>
            <person name="Kolonay J.F."/>
            <person name="Madupu R."/>
            <person name="Peterson J.D."/>
            <person name="Umayam L.A."/>
            <person name="White O."/>
            <person name="Wolf A.M."/>
            <person name="Vamathevan J.J."/>
            <person name="Weidman J.F."/>
            <person name="Impraim M."/>
            <person name="Lee K."/>
            <person name="Berry K.J."/>
            <person name="Lee C."/>
            <person name="Mueller J."/>
            <person name="Khouri H.M."/>
            <person name="Gill J."/>
            <person name="Utterback T.R."/>
            <person name="McDonald L.A."/>
            <person name="Feldblyum T.V."/>
            <person name="Smith H.O."/>
            <person name="Venter J.C."/>
            <person name="Nealson K.H."/>
            <person name="Fraser C.M."/>
        </authorList>
    </citation>
    <scope>NUCLEOTIDE SEQUENCE [LARGE SCALE GENOMIC DNA]</scope>
    <source>
        <strain>ATCC 700550 / JCM 31522 / CIP 106686 / LMG 19005 / NCIMB 14063 / MR-1</strain>
    </source>
</reference>
<protein>
    <recommendedName>
        <fullName evidence="1">Putative pre-16S rRNA nuclease</fullName>
        <ecNumber evidence="1">3.1.-.-</ecNumber>
    </recommendedName>
</protein>
<sequence>MNAKTVLGFDFGTKSIGVAVGQQITASATPLLSIKAVDGIPNWEEIAKLIQEWQPDLVVVGLPLNMDGTEQEMTHRARKFANRLNAKFGVKIFTQDERLTTTDAKARLFELGGYKALTKGQVDAVSAVLIIESYFENHFGD</sequence>
<keyword id="KW-0963">Cytoplasm</keyword>
<keyword id="KW-0378">Hydrolase</keyword>
<keyword id="KW-0540">Nuclease</keyword>
<keyword id="KW-1185">Reference proteome</keyword>
<keyword id="KW-0690">Ribosome biogenesis</keyword>
<gene>
    <name type="ordered locus">SO_3347</name>
</gene>
<dbReference type="EC" id="3.1.-.-" evidence="1"/>
<dbReference type="EMBL" id="AE014299">
    <property type="protein sequence ID" value="AAN56345.1"/>
    <property type="molecule type" value="Genomic_DNA"/>
</dbReference>
<dbReference type="RefSeq" id="NP_718901.1">
    <property type="nucleotide sequence ID" value="NC_004347.2"/>
</dbReference>
<dbReference type="RefSeq" id="WP_011073217.1">
    <property type="nucleotide sequence ID" value="NC_004347.2"/>
</dbReference>
<dbReference type="SMR" id="Q8EBZ8"/>
<dbReference type="STRING" id="211586.SO_3347"/>
<dbReference type="PaxDb" id="211586-SO_3347"/>
<dbReference type="KEGG" id="son:SO_3347"/>
<dbReference type="PATRIC" id="fig|211586.12.peg.3247"/>
<dbReference type="eggNOG" id="COG0816">
    <property type="taxonomic scope" value="Bacteria"/>
</dbReference>
<dbReference type="HOGENOM" id="CLU_098240_3_0_6"/>
<dbReference type="OrthoDB" id="9796140at2"/>
<dbReference type="PhylomeDB" id="Q8EBZ8"/>
<dbReference type="BioCyc" id="SONE211586:G1GMP-3115-MONOMER"/>
<dbReference type="Proteomes" id="UP000008186">
    <property type="component" value="Chromosome"/>
</dbReference>
<dbReference type="GO" id="GO:0005737">
    <property type="term" value="C:cytoplasm"/>
    <property type="evidence" value="ECO:0007669"/>
    <property type="project" value="UniProtKB-SubCell"/>
</dbReference>
<dbReference type="GO" id="GO:0004518">
    <property type="term" value="F:nuclease activity"/>
    <property type="evidence" value="ECO:0007669"/>
    <property type="project" value="UniProtKB-KW"/>
</dbReference>
<dbReference type="GO" id="GO:0000967">
    <property type="term" value="P:rRNA 5'-end processing"/>
    <property type="evidence" value="ECO:0000318"/>
    <property type="project" value="GO_Central"/>
</dbReference>
<dbReference type="CDD" id="cd16964">
    <property type="entry name" value="YqgF"/>
    <property type="match status" value="1"/>
</dbReference>
<dbReference type="FunFam" id="3.30.420.140:FF:000002">
    <property type="entry name" value="Putative pre-16S rRNA nuclease"/>
    <property type="match status" value="1"/>
</dbReference>
<dbReference type="Gene3D" id="3.30.420.140">
    <property type="entry name" value="YqgF/RNase H-like domain"/>
    <property type="match status" value="1"/>
</dbReference>
<dbReference type="HAMAP" id="MF_00651">
    <property type="entry name" value="Nuclease_YqgF"/>
    <property type="match status" value="1"/>
</dbReference>
<dbReference type="InterPro" id="IPR012337">
    <property type="entry name" value="RNaseH-like_sf"/>
</dbReference>
<dbReference type="InterPro" id="IPR005227">
    <property type="entry name" value="YqgF"/>
</dbReference>
<dbReference type="InterPro" id="IPR006641">
    <property type="entry name" value="YqgF/RNaseH-like_dom"/>
</dbReference>
<dbReference type="InterPro" id="IPR037027">
    <property type="entry name" value="YqgF/RNaseH-like_dom_sf"/>
</dbReference>
<dbReference type="NCBIfam" id="TIGR00250">
    <property type="entry name" value="RNAse_H_YqgF"/>
    <property type="match status" value="1"/>
</dbReference>
<dbReference type="PANTHER" id="PTHR33317">
    <property type="entry name" value="POLYNUCLEOTIDYL TRANSFERASE, RIBONUCLEASE H-LIKE SUPERFAMILY PROTEIN"/>
    <property type="match status" value="1"/>
</dbReference>
<dbReference type="PANTHER" id="PTHR33317:SF4">
    <property type="entry name" value="POLYNUCLEOTIDYL TRANSFERASE, RIBONUCLEASE H-LIKE SUPERFAMILY PROTEIN"/>
    <property type="match status" value="1"/>
</dbReference>
<dbReference type="Pfam" id="PF03652">
    <property type="entry name" value="RuvX"/>
    <property type="match status" value="1"/>
</dbReference>
<dbReference type="SMART" id="SM00732">
    <property type="entry name" value="YqgFc"/>
    <property type="match status" value="1"/>
</dbReference>
<dbReference type="SUPFAM" id="SSF53098">
    <property type="entry name" value="Ribonuclease H-like"/>
    <property type="match status" value="1"/>
</dbReference>
<comment type="function">
    <text evidence="1">Could be a nuclease involved in processing of the 5'-end of pre-16S rRNA.</text>
</comment>
<comment type="subcellular location">
    <subcellularLocation>
        <location evidence="1">Cytoplasm</location>
    </subcellularLocation>
</comment>
<comment type="similarity">
    <text evidence="1">Belongs to the YqgF nuclease family.</text>
</comment>
<feature type="chain" id="PRO_0000172134" description="Putative pre-16S rRNA nuclease">
    <location>
        <begin position="1"/>
        <end position="141"/>
    </location>
</feature>
<evidence type="ECO:0000255" key="1">
    <source>
        <dbReference type="HAMAP-Rule" id="MF_00651"/>
    </source>
</evidence>
<organism>
    <name type="scientific">Shewanella oneidensis (strain ATCC 700550 / JCM 31522 / CIP 106686 / LMG 19005 / NCIMB 14063 / MR-1)</name>
    <dbReference type="NCBI Taxonomy" id="211586"/>
    <lineage>
        <taxon>Bacteria</taxon>
        <taxon>Pseudomonadati</taxon>
        <taxon>Pseudomonadota</taxon>
        <taxon>Gammaproteobacteria</taxon>
        <taxon>Alteromonadales</taxon>
        <taxon>Shewanellaceae</taxon>
        <taxon>Shewanella</taxon>
    </lineage>
</organism>
<proteinExistence type="inferred from homology"/>
<name>YQGF_SHEON</name>